<evidence type="ECO:0000255" key="1">
    <source>
        <dbReference type="HAMAP-Rule" id="MF_01053"/>
    </source>
</evidence>
<accession>B7MBA2</accession>
<gene>
    <name evidence="1" type="primary">yacL</name>
    <name type="ordered locus">ECS88_0128</name>
</gene>
<dbReference type="EMBL" id="CU928161">
    <property type="protein sequence ID" value="CAR01493.1"/>
    <property type="molecule type" value="Genomic_DNA"/>
</dbReference>
<dbReference type="RefSeq" id="WP_000384306.1">
    <property type="nucleotide sequence ID" value="NC_011742.1"/>
</dbReference>
<dbReference type="GeneID" id="93777317"/>
<dbReference type="KEGG" id="ecz:ECS88_0128"/>
<dbReference type="HOGENOM" id="CLU_139226_0_0_6"/>
<dbReference type="Proteomes" id="UP000000747">
    <property type="component" value="Chromosome"/>
</dbReference>
<dbReference type="HAMAP" id="MF_01053">
    <property type="entry name" value="UPF0231"/>
    <property type="match status" value="1"/>
</dbReference>
<dbReference type="InterPro" id="IPR008249">
    <property type="entry name" value="UPF0231"/>
</dbReference>
<dbReference type="NCBIfam" id="NF003574">
    <property type="entry name" value="PRK05248.1-1"/>
    <property type="match status" value="1"/>
</dbReference>
<dbReference type="NCBIfam" id="NF003576">
    <property type="entry name" value="PRK05248.1-3"/>
    <property type="match status" value="1"/>
</dbReference>
<dbReference type="Pfam" id="PF06062">
    <property type="entry name" value="UPF0231"/>
    <property type="match status" value="1"/>
</dbReference>
<dbReference type="PIRSF" id="PIRSF006287">
    <property type="entry name" value="UCP006287"/>
    <property type="match status" value="1"/>
</dbReference>
<proteinExistence type="inferred from homology"/>
<sequence>MDYEFLRDITGVVKVRMSMGHEVVGHWFNEEVKENLALLDEVEQAAHALKGSERSWQRAGHEYTLWMDGEEVMVRANQLEFAGDEMEEGMNYYDEESLSLCGVEDFLQVVAAYRNFVQQK</sequence>
<comment type="similarity">
    <text evidence="1">Belongs to the UPF0231 family.</text>
</comment>
<keyword id="KW-1185">Reference proteome</keyword>
<organism>
    <name type="scientific">Escherichia coli O45:K1 (strain S88 / ExPEC)</name>
    <dbReference type="NCBI Taxonomy" id="585035"/>
    <lineage>
        <taxon>Bacteria</taxon>
        <taxon>Pseudomonadati</taxon>
        <taxon>Pseudomonadota</taxon>
        <taxon>Gammaproteobacteria</taxon>
        <taxon>Enterobacterales</taxon>
        <taxon>Enterobacteriaceae</taxon>
        <taxon>Escherichia</taxon>
    </lineage>
</organism>
<reference key="1">
    <citation type="journal article" date="2009" name="PLoS Genet.">
        <title>Organised genome dynamics in the Escherichia coli species results in highly diverse adaptive paths.</title>
        <authorList>
            <person name="Touchon M."/>
            <person name="Hoede C."/>
            <person name="Tenaillon O."/>
            <person name="Barbe V."/>
            <person name="Baeriswyl S."/>
            <person name="Bidet P."/>
            <person name="Bingen E."/>
            <person name="Bonacorsi S."/>
            <person name="Bouchier C."/>
            <person name="Bouvet O."/>
            <person name="Calteau A."/>
            <person name="Chiapello H."/>
            <person name="Clermont O."/>
            <person name="Cruveiller S."/>
            <person name="Danchin A."/>
            <person name="Diard M."/>
            <person name="Dossat C."/>
            <person name="Karoui M.E."/>
            <person name="Frapy E."/>
            <person name="Garry L."/>
            <person name="Ghigo J.M."/>
            <person name="Gilles A.M."/>
            <person name="Johnson J."/>
            <person name="Le Bouguenec C."/>
            <person name="Lescat M."/>
            <person name="Mangenot S."/>
            <person name="Martinez-Jehanne V."/>
            <person name="Matic I."/>
            <person name="Nassif X."/>
            <person name="Oztas S."/>
            <person name="Petit M.A."/>
            <person name="Pichon C."/>
            <person name="Rouy Z."/>
            <person name="Ruf C.S."/>
            <person name="Schneider D."/>
            <person name="Tourret J."/>
            <person name="Vacherie B."/>
            <person name="Vallenet D."/>
            <person name="Medigue C."/>
            <person name="Rocha E.P.C."/>
            <person name="Denamur E."/>
        </authorList>
    </citation>
    <scope>NUCLEOTIDE SEQUENCE [LARGE SCALE GENOMIC DNA]</scope>
    <source>
        <strain>S88 / ExPEC</strain>
    </source>
</reference>
<feature type="chain" id="PRO_1000136289" description="UPF0231 protein YacL">
    <location>
        <begin position="1"/>
        <end position="120"/>
    </location>
</feature>
<name>YACL_ECO45</name>
<protein>
    <recommendedName>
        <fullName evidence="1">UPF0231 protein YacL</fullName>
    </recommendedName>
</protein>